<organism>
    <name type="scientific">Xenopus tropicalis</name>
    <name type="common">Western clawed frog</name>
    <name type="synonym">Silurana tropicalis</name>
    <dbReference type="NCBI Taxonomy" id="8364"/>
    <lineage>
        <taxon>Eukaryota</taxon>
        <taxon>Metazoa</taxon>
        <taxon>Chordata</taxon>
        <taxon>Craniata</taxon>
        <taxon>Vertebrata</taxon>
        <taxon>Euteleostomi</taxon>
        <taxon>Amphibia</taxon>
        <taxon>Batrachia</taxon>
        <taxon>Anura</taxon>
        <taxon>Pipoidea</taxon>
        <taxon>Pipidae</taxon>
        <taxon>Xenopodinae</taxon>
        <taxon>Xenopus</taxon>
        <taxon>Silurana</taxon>
    </lineage>
</organism>
<keyword id="KW-0963">Cytoplasm</keyword>
<keyword id="KW-0968">Cytoplasmic vesicle</keyword>
<keyword id="KW-0931">ER-Golgi transport</keyword>
<keyword id="KW-0333">Golgi apparatus</keyword>
<keyword id="KW-0472">Membrane</keyword>
<keyword id="KW-0653">Protein transport</keyword>
<keyword id="KW-1185">Reference proteome</keyword>
<keyword id="KW-0677">Repeat</keyword>
<keyword id="KW-0813">Transport</keyword>
<reference key="1">
    <citation type="submission" date="2004-08" db="EMBL/GenBank/DDBJ databases">
        <authorList>
            <consortium name="NIH - Xenopus Gene Collection (XGC) project"/>
        </authorList>
    </citation>
    <scope>NUCLEOTIDE SEQUENCE [LARGE SCALE MRNA]</scope>
    <source>
        <tissue>Embryo</tissue>
    </source>
</reference>
<comment type="function">
    <text evidence="1">The coatomer is a cytosolic protein complex that binds to dilysine motifs and reversibly associates with Golgi non-clathrin-coated vesicles, which further mediate biosynthetic protein transport from the ER, via the Golgi up to the trans Golgi network. Coatomer complex is required for budding from Golgi membranes, and is essential for the retrograde Golgi-to-ER transport of dilysine-tagged proteins (By similarity).</text>
</comment>
<comment type="subunit">
    <text evidence="1">Oligomeric complex.</text>
</comment>
<comment type="subcellular location">
    <subcellularLocation>
        <location evidence="1">Cytoplasm</location>
    </subcellularLocation>
    <subcellularLocation>
        <location evidence="1">Golgi apparatus membrane</location>
        <topology evidence="1">Peripheral membrane protein</topology>
        <orientation evidence="1">Cytoplasmic side</orientation>
    </subcellularLocation>
    <subcellularLocation>
        <location evidence="1">Cytoplasmic vesicle</location>
        <location evidence="1">COPI-coated vesicle membrane</location>
        <topology evidence="1">Peripheral membrane protein</topology>
        <orientation evidence="1">Cytoplasmic side</orientation>
    </subcellularLocation>
</comment>
<comment type="similarity">
    <text evidence="2">Belongs to the COPG family.</text>
</comment>
<proteinExistence type="evidence at transcript level"/>
<dbReference type="EMBL" id="BC080897">
    <property type="protein sequence ID" value="AAH80897.1"/>
    <property type="molecule type" value="mRNA"/>
</dbReference>
<dbReference type="RefSeq" id="NP_001008019.1">
    <property type="nucleotide sequence ID" value="NM_001008018.1"/>
</dbReference>
<dbReference type="SMR" id="Q66JI9"/>
<dbReference type="FunCoup" id="Q66JI9">
    <property type="interactions" value="2968"/>
</dbReference>
<dbReference type="STRING" id="8364.ENSXETP00000054742"/>
<dbReference type="PaxDb" id="8364-ENSXETP00000035553"/>
<dbReference type="DNASU" id="493381"/>
<dbReference type="GeneID" id="493381"/>
<dbReference type="KEGG" id="xtr:493381"/>
<dbReference type="AGR" id="Xenbase:XB-GENE-941264"/>
<dbReference type="CTD" id="26958"/>
<dbReference type="Xenbase" id="XB-GENE-941264">
    <property type="gene designation" value="copg2"/>
</dbReference>
<dbReference type="eggNOG" id="KOG1078">
    <property type="taxonomic scope" value="Eukaryota"/>
</dbReference>
<dbReference type="InParanoid" id="Q66JI9"/>
<dbReference type="OrthoDB" id="1074925at2759"/>
<dbReference type="Reactome" id="R-XTR-6807878">
    <property type="pathway name" value="COPI-mediated anterograde transport"/>
</dbReference>
<dbReference type="Reactome" id="R-XTR-6811434">
    <property type="pathway name" value="COPI-dependent Golgi-to-ER retrograde traffic"/>
</dbReference>
<dbReference type="Proteomes" id="UP000008143">
    <property type="component" value="Chromosome 3"/>
</dbReference>
<dbReference type="GO" id="GO:0030126">
    <property type="term" value="C:COPI vesicle coat"/>
    <property type="evidence" value="ECO:0007669"/>
    <property type="project" value="InterPro"/>
</dbReference>
<dbReference type="GO" id="GO:0000139">
    <property type="term" value="C:Golgi membrane"/>
    <property type="evidence" value="ECO:0007669"/>
    <property type="project" value="UniProtKB-SubCell"/>
</dbReference>
<dbReference type="GO" id="GO:0005198">
    <property type="term" value="F:structural molecule activity"/>
    <property type="evidence" value="ECO:0007669"/>
    <property type="project" value="InterPro"/>
</dbReference>
<dbReference type="GO" id="GO:0006886">
    <property type="term" value="P:intracellular protein transport"/>
    <property type="evidence" value="ECO:0007669"/>
    <property type="project" value="InterPro"/>
</dbReference>
<dbReference type="GO" id="GO:0016192">
    <property type="term" value="P:vesicle-mediated transport"/>
    <property type="evidence" value="ECO:0007669"/>
    <property type="project" value="UniProtKB-KW"/>
</dbReference>
<dbReference type="FunFam" id="1.25.10.10:FF:000038">
    <property type="entry name" value="Coatomer subunit gamma"/>
    <property type="match status" value="1"/>
</dbReference>
<dbReference type="FunFam" id="1.25.10.10:FF:000071">
    <property type="entry name" value="Coatomer subunit gamma"/>
    <property type="match status" value="1"/>
</dbReference>
<dbReference type="FunFam" id="2.60.40.1480:FF:000001">
    <property type="entry name" value="Coatomer subunit gamma"/>
    <property type="match status" value="1"/>
</dbReference>
<dbReference type="FunFam" id="3.30.310.10:FF:000006">
    <property type="entry name" value="Coatomer subunit gamma"/>
    <property type="match status" value="1"/>
</dbReference>
<dbReference type="Gene3D" id="2.60.40.1480">
    <property type="entry name" value="Coatomer, gamma subunit, appendage domain"/>
    <property type="match status" value="1"/>
</dbReference>
<dbReference type="Gene3D" id="1.25.10.10">
    <property type="entry name" value="Leucine-rich Repeat Variant"/>
    <property type="match status" value="2"/>
</dbReference>
<dbReference type="Gene3D" id="3.30.310.10">
    <property type="entry name" value="TATA-Binding Protein"/>
    <property type="match status" value="1"/>
</dbReference>
<dbReference type="InterPro" id="IPR011989">
    <property type="entry name" value="ARM-like"/>
</dbReference>
<dbReference type="InterPro" id="IPR016024">
    <property type="entry name" value="ARM-type_fold"/>
</dbReference>
<dbReference type="InterPro" id="IPR002553">
    <property type="entry name" value="Clathrin/coatomer_adapt-like_N"/>
</dbReference>
<dbReference type="InterPro" id="IPR013041">
    <property type="entry name" value="Clathrin_app_Ig-like_sf"/>
</dbReference>
<dbReference type="InterPro" id="IPR009028">
    <property type="entry name" value="Coatomer/calthrin_app_sub_C"/>
</dbReference>
<dbReference type="InterPro" id="IPR032154">
    <property type="entry name" value="Coatomer_g_Cpla"/>
</dbReference>
<dbReference type="InterPro" id="IPR017106">
    <property type="entry name" value="Coatomer_gsu"/>
</dbReference>
<dbReference type="InterPro" id="IPR013040">
    <property type="entry name" value="Coatomer_gsu_app_Ig-like_dom"/>
</dbReference>
<dbReference type="InterPro" id="IPR037067">
    <property type="entry name" value="Coatomer_gsu_app_sf"/>
</dbReference>
<dbReference type="InterPro" id="IPR012295">
    <property type="entry name" value="TBP_dom_sf"/>
</dbReference>
<dbReference type="PANTHER" id="PTHR10261">
    <property type="entry name" value="COATOMER SUBUNIT GAMMA"/>
    <property type="match status" value="1"/>
</dbReference>
<dbReference type="PANTHER" id="PTHR10261:SF4">
    <property type="entry name" value="COATOMER SUBUNIT GAMMA-2"/>
    <property type="match status" value="1"/>
</dbReference>
<dbReference type="Pfam" id="PF01602">
    <property type="entry name" value="Adaptin_N"/>
    <property type="match status" value="1"/>
</dbReference>
<dbReference type="Pfam" id="PF16381">
    <property type="entry name" value="Coatomer_g_Cpla"/>
    <property type="match status" value="1"/>
</dbReference>
<dbReference type="Pfam" id="PF08752">
    <property type="entry name" value="COP-gamma_platf"/>
    <property type="match status" value="1"/>
</dbReference>
<dbReference type="PIRSF" id="PIRSF037093">
    <property type="entry name" value="Coatomer_gamma_subunit"/>
    <property type="match status" value="1"/>
</dbReference>
<dbReference type="SUPFAM" id="SSF48371">
    <property type="entry name" value="ARM repeat"/>
    <property type="match status" value="1"/>
</dbReference>
<dbReference type="SUPFAM" id="SSF49348">
    <property type="entry name" value="Clathrin adaptor appendage domain"/>
    <property type="match status" value="1"/>
</dbReference>
<dbReference type="SUPFAM" id="SSF55711">
    <property type="entry name" value="Subdomain of clathrin and coatomer appendage domain"/>
    <property type="match status" value="1"/>
</dbReference>
<sequence>MIKKFDKKDEESGIGSNPFQHLEKSAVLQEARLFNETPINPRRCLHILTKILYLLNQGEHFGTMEATEAFFAMTRLFQSNDQTLRRMCYLTIKEMANISEDVIIVTSSLTKDMTGKEDVYRGPAIRALCRITDATMLQGIERYMKQAIVDKVSSVSSSALVSSLHMTKISYDVVKRWINEAQEAASSDNIMVQYHALGLLYNLRKNDRLAVSKMLNKFTKSGLKSPFAYCMLIRIASRLLEESEEGHNSPLFDFIESCLRNKHEMVIYEAASAIIHLPNCTARELAPAVSVLQLFCSSPKPALRYAAVRTLNKVAMKHPSAVTACNLDLENLITDSNRSIATLAITTLLKTGSESSVDRLMKQISTFVSEISDEFKVVVVQAISALCQKYPRKHSVMMTFLSNMLRDDGGFEYKRAIVDCIISIIEENPDSKESGLAHLCEFIEDCEHTVLATKILHLLGREGPKTPTPSKYIRFIFNRVVLENEAVRAAAVSALAKFGAQNEPLLPSVLVLLQRCMMDSDDEVRDRATFYFNVLNQNQLALNTAYIFNGLTVSVFGMEKALHQYTLEPSEKPFDMKTVPLATVPFLEQKTDLAPIATKQPEKMVPVRQDIFQDQLAAIPEFKNLGPLFKSSEPVQLTEAETEYFVRCIKHVFPNHIVFQFDCTNTLNDQLLEKVTVQMEPSEAYEVVHYVPAPSLPYNQPGISYTLVRLPDDDPTAVSCTFSCTMKFVVRDCDPQTGVPDDEGYSDEYVLEDLEVTLSDHIQKILKPNFGAAWEEIGDTYEKEETFALTTTKSLEEAVNNIIKFLGMQPCERSDKVPENKNSHVLYLSGVYRGGHDVLVRSRLALADGVTMQVTVRSQDETPANVILVSVG</sequence>
<name>COPG2_XENTR</name>
<evidence type="ECO:0000250" key="1"/>
<evidence type="ECO:0000305" key="2"/>
<gene>
    <name type="primary">copg2</name>
</gene>
<accession>Q66JI9</accession>
<protein>
    <recommendedName>
        <fullName>Coatomer subunit gamma-2</fullName>
    </recommendedName>
    <alternativeName>
        <fullName>Gamma-2-coat protein</fullName>
        <shortName>Gamma-2-COP</shortName>
    </alternativeName>
</protein>
<feature type="chain" id="PRO_0000342522" description="Coatomer subunit gamma-2">
    <location>
        <begin position="1"/>
        <end position="872"/>
    </location>
</feature>
<feature type="repeat" description="HEAT 1">
    <location>
        <begin position="64"/>
        <end position="101"/>
    </location>
</feature>
<feature type="repeat" description="HEAT 2">
    <location>
        <begin position="283"/>
        <end position="320"/>
    </location>
</feature>
<feature type="repeat" description="HEAT 3">
    <location>
        <begin position="321"/>
        <end position="355"/>
    </location>
</feature>
<feature type="repeat" description="HEAT 4">
    <location>
        <begin position="356"/>
        <end position="392"/>
    </location>
</feature>
<feature type="repeat" description="HEAT 5">
    <location>
        <begin position="395"/>
        <end position="430"/>
    </location>
</feature>
<feature type="repeat" description="HEAT 6">
    <location>
        <begin position="467"/>
        <end position="504"/>
    </location>
</feature>